<protein>
    <recommendedName>
        <fullName evidence="3">Class 10 plant pathogenesis-related protein 2F</fullName>
        <shortName evidence="3">Llpr10.2f</shortName>
        <shortName evidence="3">Ypr-10.2f</shortName>
        <ecNumber evidence="1">3.1.27.-</ecNumber>
    </recommendedName>
    <allergenName evidence="4">Lup l 4</allergenName>
</protein>
<feature type="chain" id="PRO_0000445934" description="Class 10 plant pathogenesis-related protein 2F">
    <location>
        <begin position="1"/>
        <end position="157"/>
    </location>
</feature>
<feature type="binding site" evidence="2">
    <location>
        <position position="8"/>
    </location>
    <ligand>
        <name>trans-zeatin</name>
        <dbReference type="ChEBI" id="CHEBI:16522"/>
        <label>1</label>
    </ligand>
</feature>
<feature type="binding site" evidence="2">
    <location>
        <position position="32"/>
    </location>
    <ligand>
        <name>Ca(2+)</name>
        <dbReference type="ChEBI" id="CHEBI:29108"/>
    </ligand>
</feature>
<feature type="binding site" evidence="2">
    <location>
        <position position="35"/>
    </location>
    <ligand>
        <name>Ca(2+)</name>
        <dbReference type="ChEBI" id="CHEBI:29108"/>
    </ligand>
</feature>
<feature type="binding site" evidence="2">
    <location>
        <position position="38"/>
    </location>
    <ligand>
        <name>Ca(2+)</name>
        <dbReference type="ChEBI" id="CHEBI:29108"/>
    </ligand>
</feature>
<feature type="binding site" evidence="2">
    <location>
        <position position="60"/>
    </location>
    <ligand>
        <name>trans-zeatin</name>
        <dbReference type="ChEBI" id="CHEBI:16522"/>
        <label>2</label>
    </ligand>
</feature>
<feature type="binding site" evidence="2">
    <location>
        <position position="69"/>
    </location>
    <ligand>
        <name>trans-zeatin</name>
        <dbReference type="ChEBI" id="CHEBI:16522"/>
        <label>3</label>
    </ligand>
</feature>
<feature type="binding site" evidence="2">
    <location>
        <position position="81"/>
    </location>
    <ligand>
        <name>trans-zeatin</name>
        <dbReference type="ChEBI" id="CHEBI:16522"/>
        <label>3</label>
    </ligand>
</feature>
<feature type="binding site" evidence="2">
    <location>
        <position position="83"/>
    </location>
    <ligand>
        <name>trans-zeatin</name>
        <dbReference type="ChEBI" id="CHEBI:16522"/>
        <label>1</label>
    </ligand>
</feature>
<dbReference type="EC" id="3.1.27.-" evidence="1"/>
<dbReference type="EMBL" id="AY303549">
    <property type="protein sequence ID" value="AAP57943.1"/>
    <property type="molecule type" value="Genomic_DNA"/>
</dbReference>
<dbReference type="SMR" id="Q7XZT8"/>
<dbReference type="Allergome" id="9727">
    <property type="allergen name" value="Lup l 4"/>
</dbReference>
<dbReference type="GO" id="GO:0005829">
    <property type="term" value="C:cytosol"/>
    <property type="evidence" value="ECO:0007669"/>
    <property type="project" value="UniProtKB-SubCell"/>
</dbReference>
<dbReference type="GO" id="GO:0005634">
    <property type="term" value="C:nucleus"/>
    <property type="evidence" value="ECO:0007669"/>
    <property type="project" value="TreeGrafter"/>
</dbReference>
<dbReference type="GO" id="GO:0010427">
    <property type="term" value="F:abscisic acid binding"/>
    <property type="evidence" value="ECO:0007669"/>
    <property type="project" value="InterPro"/>
</dbReference>
<dbReference type="GO" id="GO:0005509">
    <property type="term" value="F:calcium ion binding"/>
    <property type="evidence" value="ECO:0000250"/>
    <property type="project" value="UniProtKB"/>
</dbReference>
<dbReference type="GO" id="GO:0044373">
    <property type="term" value="F:cytokinin binding"/>
    <property type="evidence" value="ECO:0000250"/>
    <property type="project" value="UniProtKB"/>
</dbReference>
<dbReference type="GO" id="GO:1904408">
    <property type="term" value="F:melatonin binding"/>
    <property type="evidence" value="ECO:0000250"/>
    <property type="project" value="UniProtKB"/>
</dbReference>
<dbReference type="GO" id="GO:0004864">
    <property type="term" value="F:protein phosphatase inhibitor activity"/>
    <property type="evidence" value="ECO:0007669"/>
    <property type="project" value="InterPro"/>
</dbReference>
<dbReference type="GO" id="GO:0004540">
    <property type="term" value="F:RNA nuclease activity"/>
    <property type="evidence" value="ECO:0000250"/>
    <property type="project" value="UniProtKB"/>
</dbReference>
<dbReference type="GO" id="GO:0038023">
    <property type="term" value="F:signaling receptor activity"/>
    <property type="evidence" value="ECO:0007669"/>
    <property type="project" value="InterPro"/>
</dbReference>
<dbReference type="GO" id="GO:0009738">
    <property type="term" value="P:abscisic acid-activated signaling pathway"/>
    <property type="evidence" value="ECO:0007669"/>
    <property type="project" value="InterPro"/>
</dbReference>
<dbReference type="GO" id="GO:0006952">
    <property type="term" value="P:defense response"/>
    <property type="evidence" value="ECO:0007669"/>
    <property type="project" value="UniProtKB-KW"/>
</dbReference>
<dbReference type="CDD" id="cd07816">
    <property type="entry name" value="Bet_v1-like"/>
    <property type="match status" value="1"/>
</dbReference>
<dbReference type="FunFam" id="3.30.530.20:FF:000007">
    <property type="entry name" value="Major pollen allergen Bet v 1-A"/>
    <property type="match status" value="1"/>
</dbReference>
<dbReference type="Gene3D" id="3.30.530.20">
    <property type="match status" value="1"/>
</dbReference>
<dbReference type="InterPro" id="IPR000916">
    <property type="entry name" value="Bet_v_I/MLP"/>
</dbReference>
<dbReference type="InterPro" id="IPR024949">
    <property type="entry name" value="Bet_v_I_allergen"/>
</dbReference>
<dbReference type="InterPro" id="IPR050279">
    <property type="entry name" value="Plant_def-hormone_signal"/>
</dbReference>
<dbReference type="InterPro" id="IPR023393">
    <property type="entry name" value="START-like_dom_sf"/>
</dbReference>
<dbReference type="PANTHER" id="PTHR31213">
    <property type="entry name" value="OS08G0374000 PROTEIN-RELATED"/>
    <property type="match status" value="1"/>
</dbReference>
<dbReference type="PANTHER" id="PTHR31213:SF55">
    <property type="entry name" value="STRESS-INDUCED PROTEIN SAM22"/>
    <property type="match status" value="1"/>
</dbReference>
<dbReference type="Pfam" id="PF00407">
    <property type="entry name" value="Bet_v_1"/>
    <property type="match status" value="1"/>
</dbReference>
<dbReference type="PRINTS" id="PR00634">
    <property type="entry name" value="BETALLERGEN"/>
</dbReference>
<dbReference type="SUPFAM" id="SSF55961">
    <property type="entry name" value="Bet v1-like"/>
    <property type="match status" value="1"/>
</dbReference>
<reference key="1">
    <citation type="submission" date="2003-05" db="EMBL/GenBank/DDBJ databases">
        <title>Yellow lupine pathogenesis-related protein of class 10.</title>
        <authorList>
            <person name="Handschuh L."/>
            <person name="Sikorski M.M."/>
        </authorList>
    </citation>
    <scope>NUCLEOTIDE SEQUENCE [GENOMIC DNA]</scope>
</reference>
<name>P102F_LUPLU</name>
<keyword id="KW-0020">Allergen</keyword>
<keyword id="KW-0106">Calcium</keyword>
<keyword id="KW-0963">Cytoplasm</keyword>
<keyword id="KW-0378">Hydrolase</keyword>
<keyword id="KW-0479">Metal-binding</keyword>
<keyword id="KW-0540">Nuclease</keyword>
<keyword id="KW-0568">Pathogenesis-related protein</keyword>
<keyword id="KW-0611">Plant defense</keyword>
<comment type="function">
    <text evidence="1 2">Class II ribonuclease (RNase) (By similarity). Binds to cytokinins (By similarity). Interacts with melatonin (By similarity).</text>
</comment>
<comment type="subcellular location">
    <subcellularLocation>
        <location evidence="2">Cytoplasm</location>
        <location evidence="2">Cytosol</location>
    </subcellularLocation>
</comment>
<comment type="allergen">
    <text evidence="4">Causes an allergic reaction in human.</text>
</comment>
<comment type="similarity">
    <text evidence="4">Belongs to the BetVI family.</text>
</comment>
<organism>
    <name type="scientific">Lupinus luteus</name>
    <name type="common">European yellow lupine</name>
    <dbReference type="NCBI Taxonomy" id="3873"/>
    <lineage>
        <taxon>Eukaryota</taxon>
        <taxon>Viridiplantae</taxon>
        <taxon>Streptophyta</taxon>
        <taxon>Embryophyta</taxon>
        <taxon>Tracheophyta</taxon>
        <taxon>Spermatophyta</taxon>
        <taxon>Magnoliopsida</taxon>
        <taxon>eudicotyledons</taxon>
        <taxon>Gunneridae</taxon>
        <taxon>Pentapetalae</taxon>
        <taxon>rosids</taxon>
        <taxon>fabids</taxon>
        <taxon>Fabales</taxon>
        <taxon>Fabaceae</taxon>
        <taxon>Papilionoideae</taxon>
        <taxon>50 kb inversion clade</taxon>
        <taxon>genistoids sensu lato</taxon>
        <taxon>core genistoids</taxon>
        <taxon>Genisteae</taxon>
        <taxon>Lupinus</taxon>
    </lineage>
</organism>
<sequence>MGIFTFEDESTTTVAPARLYKALVKDADTIIPKAVEAIQSVEIVEGNGGPGTIKKLTLIEGGETKYVLHKIEAIDEANLGYNYSIVGGIGLPDTIEKISFETKLFEGANGGSIGKVTIKIETKGDAQPNEEEGKAAKARGDAFFKAIENYLIGHPEY</sequence>
<accession>Q7XZT8</accession>
<gene>
    <name evidence="3" type="primary">PR10.2F</name>
</gene>
<proteinExistence type="inferred from homology"/>
<evidence type="ECO:0000250" key="1">
    <source>
        <dbReference type="UniProtKB" id="P52779"/>
    </source>
</evidence>
<evidence type="ECO:0000250" key="2">
    <source>
        <dbReference type="UniProtKB" id="Q9LLQ2"/>
    </source>
</evidence>
<evidence type="ECO:0000303" key="3">
    <source ref="1"/>
</evidence>
<evidence type="ECO:0000305" key="4"/>